<feature type="chain" id="PRO_1000070041" description="Tyrosine recombinase XerC">
    <location>
        <begin position="1"/>
        <end position="298"/>
    </location>
</feature>
<feature type="domain" description="Core-binding (CB)" evidence="3">
    <location>
        <begin position="2"/>
        <end position="88"/>
    </location>
</feature>
<feature type="domain" description="Tyr recombinase" evidence="2">
    <location>
        <begin position="109"/>
        <end position="288"/>
    </location>
</feature>
<feature type="active site" evidence="1">
    <location>
        <position position="148"/>
    </location>
</feature>
<feature type="active site" evidence="1">
    <location>
        <position position="172"/>
    </location>
</feature>
<feature type="active site" evidence="1">
    <location>
        <position position="240"/>
    </location>
</feature>
<feature type="active site" evidence="1">
    <location>
        <position position="243"/>
    </location>
</feature>
<feature type="active site" evidence="1">
    <location>
        <position position="266"/>
    </location>
</feature>
<feature type="active site" description="O-(3'-phospho-DNA)-tyrosine intermediate" evidence="1">
    <location>
        <position position="275"/>
    </location>
</feature>
<sequence>MTDLHTDVERYLRYLSVERQLSPITLLNYQRQLEAIINFASENGLQSWQQCDAAMVRNFAVRSRHKGLGAASLALRLSALRSFFDWLVSQNELKANPAKGVSAPKAPRHLPKNIDVDDMNRLLDIDINDPLAVRDRAMLEVMYGAGLRLSELVGLDIKHLDLESGEVWVMGKGSKERRLPIGRNAVAWIEHWLDLRDLFGSEDDALFLSKLGKRISARNVQKRFAEWGIKQGLNNHVHPHKLRHSFATHMLESSGDLRGVQELLGHANLSTTQIYTHLDFQHLASVYDAAHPRAKRGK</sequence>
<protein>
    <recommendedName>
        <fullName evidence="1">Tyrosine recombinase XerC</fullName>
    </recommendedName>
</protein>
<accession>Q0SZ02</accession>
<proteinExistence type="inferred from homology"/>
<organism>
    <name type="scientific">Shigella flexneri serotype 5b (strain 8401)</name>
    <dbReference type="NCBI Taxonomy" id="373384"/>
    <lineage>
        <taxon>Bacteria</taxon>
        <taxon>Pseudomonadati</taxon>
        <taxon>Pseudomonadota</taxon>
        <taxon>Gammaproteobacteria</taxon>
        <taxon>Enterobacterales</taxon>
        <taxon>Enterobacteriaceae</taxon>
        <taxon>Shigella</taxon>
    </lineage>
</organism>
<evidence type="ECO:0000255" key="1">
    <source>
        <dbReference type="HAMAP-Rule" id="MF_01808"/>
    </source>
</evidence>
<evidence type="ECO:0000255" key="2">
    <source>
        <dbReference type="PROSITE-ProRule" id="PRU01246"/>
    </source>
</evidence>
<evidence type="ECO:0000255" key="3">
    <source>
        <dbReference type="PROSITE-ProRule" id="PRU01248"/>
    </source>
</evidence>
<comment type="function">
    <text evidence="1">Site-specific tyrosine recombinase, which acts by catalyzing the cutting and rejoining of the recombining DNA molecules. Binds cooperatively to specific DNA consensus sequences that are separated from XerD binding sites by a short central region, forming the heterotetrameric XerC-XerD complex that recombines DNA substrates. The complex is essential to convert dimers of the bacterial chromosome into monomers to permit their segregation at cell division. It also contributes to the segregational stability of plasmids. In the complex XerC specifically exchanges the top DNA strands.</text>
</comment>
<comment type="activity regulation">
    <text evidence="1">FtsK may regulate the catalytic switch between XerC and XerD in the heterotetrameric complex during the two steps of the recombination process.</text>
</comment>
<comment type="subunit">
    <text evidence="1">Forms a cyclic heterotetrameric complex composed of two molecules of XerC and two molecules of XerD, in which XerC interacts with XerD via its C-terminal region, XerD interacts with XerC via its C-terminal region and so on.</text>
</comment>
<comment type="subcellular location">
    <subcellularLocation>
        <location evidence="1">Cytoplasm</location>
    </subcellularLocation>
</comment>
<comment type="similarity">
    <text evidence="1">Belongs to the 'phage' integrase family. XerC subfamily.</text>
</comment>
<name>XERC_SHIF8</name>
<keyword id="KW-0131">Cell cycle</keyword>
<keyword id="KW-0132">Cell division</keyword>
<keyword id="KW-0159">Chromosome partition</keyword>
<keyword id="KW-0963">Cytoplasm</keyword>
<keyword id="KW-0229">DNA integration</keyword>
<keyword id="KW-0233">DNA recombination</keyword>
<keyword id="KW-0238">DNA-binding</keyword>
<gene>
    <name evidence="1" type="primary">xerC</name>
    <name type="ordered locus">SFV_3688</name>
</gene>
<reference key="1">
    <citation type="journal article" date="2006" name="BMC Genomics">
        <title>Complete genome sequence of Shigella flexneri 5b and comparison with Shigella flexneri 2a.</title>
        <authorList>
            <person name="Nie H."/>
            <person name="Yang F."/>
            <person name="Zhang X."/>
            <person name="Yang J."/>
            <person name="Chen L."/>
            <person name="Wang J."/>
            <person name="Xiong Z."/>
            <person name="Peng J."/>
            <person name="Sun L."/>
            <person name="Dong J."/>
            <person name="Xue Y."/>
            <person name="Xu X."/>
            <person name="Chen S."/>
            <person name="Yao Z."/>
            <person name="Shen Y."/>
            <person name="Jin Q."/>
        </authorList>
    </citation>
    <scope>NUCLEOTIDE SEQUENCE [LARGE SCALE GENOMIC DNA]</scope>
    <source>
        <strain>8401</strain>
    </source>
</reference>
<dbReference type="EMBL" id="CP000266">
    <property type="protein sequence ID" value="ABF05713.1"/>
    <property type="molecule type" value="Genomic_DNA"/>
</dbReference>
<dbReference type="RefSeq" id="WP_000130683.1">
    <property type="nucleotide sequence ID" value="NC_008258.1"/>
</dbReference>
<dbReference type="SMR" id="Q0SZ02"/>
<dbReference type="KEGG" id="sfv:SFV_3688"/>
<dbReference type="HOGENOM" id="CLU_027562_9_0_6"/>
<dbReference type="Proteomes" id="UP000000659">
    <property type="component" value="Chromosome"/>
</dbReference>
<dbReference type="GO" id="GO:0005737">
    <property type="term" value="C:cytoplasm"/>
    <property type="evidence" value="ECO:0007669"/>
    <property type="project" value="UniProtKB-SubCell"/>
</dbReference>
<dbReference type="GO" id="GO:0003677">
    <property type="term" value="F:DNA binding"/>
    <property type="evidence" value="ECO:0007669"/>
    <property type="project" value="UniProtKB-KW"/>
</dbReference>
<dbReference type="GO" id="GO:0009037">
    <property type="term" value="F:tyrosine-based site-specific recombinase activity"/>
    <property type="evidence" value="ECO:0007669"/>
    <property type="project" value="UniProtKB-UniRule"/>
</dbReference>
<dbReference type="GO" id="GO:0051301">
    <property type="term" value="P:cell division"/>
    <property type="evidence" value="ECO:0007669"/>
    <property type="project" value="UniProtKB-KW"/>
</dbReference>
<dbReference type="GO" id="GO:0007059">
    <property type="term" value="P:chromosome segregation"/>
    <property type="evidence" value="ECO:0007669"/>
    <property type="project" value="UniProtKB-UniRule"/>
</dbReference>
<dbReference type="GO" id="GO:0006313">
    <property type="term" value="P:DNA transposition"/>
    <property type="evidence" value="ECO:0007669"/>
    <property type="project" value="UniProtKB-UniRule"/>
</dbReference>
<dbReference type="CDD" id="cd00798">
    <property type="entry name" value="INT_XerDC_C"/>
    <property type="match status" value="1"/>
</dbReference>
<dbReference type="FunFam" id="1.10.443.10:FF:000002">
    <property type="entry name" value="Tyrosine recombinase XerC"/>
    <property type="match status" value="1"/>
</dbReference>
<dbReference type="Gene3D" id="1.10.150.130">
    <property type="match status" value="1"/>
</dbReference>
<dbReference type="Gene3D" id="1.10.443.10">
    <property type="entry name" value="Intergrase catalytic core"/>
    <property type="match status" value="1"/>
</dbReference>
<dbReference type="HAMAP" id="MF_01808">
    <property type="entry name" value="Recomb_XerC_XerD"/>
    <property type="match status" value="1"/>
</dbReference>
<dbReference type="InterPro" id="IPR044068">
    <property type="entry name" value="CB"/>
</dbReference>
<dbReference type="InterPro" id="IPR011010">
    <property type="entry name" value="DNA_brk_join_enz"/>
</dbReference>
<dbReference type="InterPro" id="IPR013762">
    <property type="entry name" value="Integrase-like_cat_sf"/>
</dbReference>
<dbReference type="InterPro" id="IPR002104">
    <property type="entry name" value="Integrase_catalytic"/>
</dbReference>
<dbReference type="InterPro" id="IPR010998">
    <property type="entry name" value="Integrase_recombinase_N"/>
</dbReference>
<dbReference type="InterPro" id="IPR004107">
    <property type="entry name" value="Integrase_SAM-like_N"/>
</dbReference>
<dbReference type="InterPro" id="IPR011931">
    <property type="entry name" value="Recomb_XerC"/>
</dbReference>
<dbReference type="InterPro" id="IPR023009">
    <property type="entry name" value="Tyrosine_recombinase_XerC/XerD"/>
</dbReference>
<dbReference type="InterPro" id="IPR050090">
    <property type="entry name" value="Tyrosine_recombinase_XerCD"/>
</dbReference>
<dbReference type="NCBIfam" id="NF001399">
    <property type="entry name" value="PRK00283.1"/>
    <property type="match status" value="1"/>
</dbReference>
<dbReference type="NCBIfam" id="TIGR02224">
    <property type="entry name" value="recomb_XerC"/>
    <property type="match status" value="1"/>
</dbReference>
<dbReference type="PANTHER" id="PTHR30349">
    <property type="entry name" value="PHAGE INTEGRASE-RELATED"/>
    <property type="match status" value="1"/>
</dbReference>
<dbReference type="PANTHER" id="PTHR30349:SF81">
    <property type="entry name" value="TYROSINE RECOMBINASE XERC"/>
    <property type="match status" value="1"/>
</dbReference>
<dbReference type="Pfam" id="PF02899">
    <property type="entry name" value="Phage_int_SAM_1"/>
    <property type="match status" value="1"/>
</dbReference>
<dbReference type="Pfam" id="PF00589">
    <property type="entry name" value="Phage_integrase"/>
    <property type="match status" value="1"/>
</dbReference>
<dbReference type="SUPFAM" id="SSF56349">
    <property type="entry name" value="DNA breaking-rejoining enzymes"/>
    <property type="match status" value="1"/>
</dbReference>
<dbReference type="SUPFAM" id="SSF47823">
    <property type="entry name" value="lambda integrase-like, N-terminal domain"/>
    <property type="match status" value="1"/>
</dbReference>
<dbReference type="PROSITE" id="PS51900">
    <property type="entry name" value="CB"/>
    <property type="match status" value="1"/>
</dbReference>
<dbReference type="PROSITE" id="PS51898">
    <property type="entry name" value="TYR_RECOMBINASE"/>
    <property type="match status" value="1"/>
</dbReference>